<feature type="chain" id="PRO_0000095931" description="Translation initiation factor IF-1, chloroplastic">
    <location>
        <begin position="1"/>
        <end position="77"/>
    </location>
</feature>
<feature type="domain" description="S1-like" evidence="1">
    <location>
        <begin position="1"/>
        <end position="71"/>
    </location>
</feature>
<dbReference type="EMBL" id="AF347635">
    <property type="protein sequence ID" value="AAK38859.1"/>
    <property type="molecule type" value="Genomic_DNA"/>
</dbReference>
<dbReference type="RefSeq" id="YP_010633218.1">
    <property type="nucleotide sequence ID" value="NC_070394.1"/>
</dbReference>
<dbReference type="SMR" id="Q95GM6"/>
<dbReference type="GeneID" id="77674268"/>
<dbReference type="GO" id="GO:0009507">
    <property type="term" value="C:chloroplast"/>
    <property type="evidence" value="ECO:0007669"/>
    <property type="project" value="UniProtKB-SubCell"/>
</dbReference>
<dbReference type="GO" id="GO:0005829">
    <property type="term" value="C:cytosol"/>
    <property type="evidence" value="ECO:0007669"/>
    <property type="project" value="TreeGrafter"/>
</dbReference>
<dbReference type="GO" id="GO:0043022">
    <property type="term" value="F:ribosome binding"/>
    <property type="evidence" value="ECO:0007669"/>
    <property type="project" value="UniProtKB-UniRule"/>
</dbReference>
<dbReference type="GO" id="GO:0019843">
    <property type="term" value="F:rRNA binding"/>
    <property type="evidence" value="ECO:0007669"/>
    <property type="project" value="UniProtKB-UniRule"/>
</dbReference>
<dbReference type="GO" id="GO:0003743">
    <property type="term" value="F:translation initiation factor activity"/>
    <property type="evidence" value="ECO:0007669"/>
    <property type="project" value="UniProtKB-UniRule"/>
</dbReference>
<dbReference type="CDD" id="cd04451">
    <property type="entry name" value="S1_IF1"/>
    <property type="match status" value="1"/>
</dbReference>
<dbReference type="FunFam" id="2.40.50.140:FF:000019">
    <property type="entry name" value="Translation initiation factor IF-1, chloroplastic"/>
    <property type="match status" value="1"/>
</dbReference>
<dbReference type="Gene3D" id="2.40.50.140">
    <property type="entry name" value="Nucleic acid-binding proteins"/>
    <property type="match status" value="1"/>
</dbReference>
<dbReference type="HAMAP" id="MF_00075">
    <property type="entry name" value="IF_1"/>
    <property type="match status" value="1"/>
</dbReference>
<dbReference type="InterPro" id="IPR012340">
    <property type="entry name" value="NA-bd_OB-fold"/>
</dbReference>
<dbReference type="InterPro" id="IPR006196">
    <property type="entry name" value="RNA-binding_domain_S1_IF1"/>
</dbReference>
<dbReference type="InterPro" id="IPR003029">
    <property type="entry name" value="S1_domain"/>
</dbReference>
<dbReference type="InterPro" id="IPR004368">
    <property type="entry name" value="TIF_IF1"/>
</dbReference>
<dbReference type="NCBIfam" id="TIGR00008">
    <property type="entry name" value="infA"/>
    <property type="match status" value="1"/>
</dbReference>
<dbReference type="PANTHER" id="PTHR33370">
    <property type="entry name" value="TRANSLATION INITIATION FACTOR IF-1, CHLOROPLASTIC"/>
    <property type="match status" value="1"/>
</dbReference>
<dbReference type="PANTHER" id="PTHR33370:SF1">
    <property type="entry name" value="TRANSLATION INITIATION FACTOR IF-1, CHLOROPLASTIC"/>
    <property type="match status" value="1"/>
</dbReference>
<dbReference type="Pfam" id="PF01176">
    <property type="entry name" value="eIF-1a"/>
    <property type="match status" value="1"/>
</dbReference>
<dbReference type="SMART" id="SM00316">
    <property type="entry name" value="S1"/>
    <property type="match status" value="1"/>
</dbReference>
<dbReference type="SUPFAM" id="SSF50249">
    <property type="entry name" value="Nucleic acid-binding proteins"/>
    <property type="match status" value="1"/>
</dbReference>
<dbReference type="PROSITE" id="PS50832">
    <property type="entry name" value="S1_IF1_TYPE"/>
    <property type="match status" value="1"/>
</dbReference>
<comment type="function">
    <text evidence="1">One of the essential components for the initiation of protein synthesis. Stabilizes the binding of IF-2 and IF-3 on the 30S subunit to which N-formylmethionyl-tRNA(fMet) subsequently binds. Helps modulate mRNA selection, yielding the 30S pre-initiation complex (PIC). Upon addition of the 50S ribosomal subunit IF-1, IF-2 and IF-3 are released leaving the mature 70S translation initiation complex.</text>
</comment>
<comment type="subunit">
    <text evidence="1">Component of the 30S ribosomal translation pre-initiation complex which assembles on the 30S ribosome in the order IF-2 and IF-3, IF-1 and N-formylmethionyl-tRNA(fMet); mRNA recruitment can occur at any time during PIC assembly.</text>
</comment>
<comment type="subcellular location">
    <subcellularLocation>
        <location evidence="1">Plastid</location>
        <location evidence="1">Chloroplast</location>
    </subcellularLocation>
</comment>
<comment type="similarity">
    <text evidence="1">Belongs to the IF-1 family.</text>
</comment>
<gene>
    <name evidence="1" type="primary">infA</name>
</gene>
<organism>
    <name type="scientific">Hedera helix</name>
    <name type="common">English ivy</name>
    <dbReference type="NCBI Taxonomy" id="4052"/>
    <lineage>
        <taxon>Eukaryota</taxon>
        <taxon>Viridiplantae</taxon>
        <taxon>Streptophyta</taxon>
        <taxon>Embryophyta</taxon>
        <taxon>Tracheophyta</taxon>
        <taxon>Spermatophyta</taxon>
        <taxon>Magnoliopsida</taxon>
        <taxon>eudicotyledons</taxon>
        <taxon>Gunneridae</taxon>
        <taxon>Pentapetalae</taxon>
        <taxon>asterids</taxon>
        <taxon>campanulids</taxon>
        <taxon>Apiales</taxon>
        <taxon>Araliaceae</taxon>
        <taxon>Hedera</taxon>
    </lineage>
</organism>
<keyword id="KW-0150">Chloroplast</keyword>
<keyword id="KW-0396">Initiation factor</keyword>
<keyword id="KW-0934">Plastid</keyword>
<keyword id="KW-0648">Protein biosynthesis</keyword>
<keyword id="KW-0694">RNA-binding</keyword>
<keyword id="KW-0699">rRNA-binding</keyword>
<evidence type="ECO:0000255" key="1">
    <source>
        <dbReference type="HAMAP-Rule" id="MF_00075"/>
    </source>
</evidence>
<name>IF1C_HEDHE</name>
<reference key="1">
    <citation type="journal article" date="2001" name="Plant Cell">
        <title>Many parallel losses of infA from chloroplast DNA during angiosperm evolution with multiple independent transfers to the nucleus.</title>
        <authorList>
            <person name="Millen R.S."/>
            <person name="Olmstead R.G."/>
            <person name="Adams K.L."/>
            <person name="Palmer J.D."/>
            <person name="Lao N.T."/>
            <person name="Heggie L."/>
            <person name="Kavanagh T.A."/>
            <person name="Hibberd J.M."/>
            <person name="Gray J.C."/>
            <person name="Morden C.W."/>
            <person name="Calie P.J."/>
            <person name="Jermiin L.S."/>
            <person name="Wolfe K.H."/>
        </authorList>
    </citation>
    <scope>NUCLEOTIDE SEQUENCE [GENOMIC DNA]</scope>
</reference>
<sequence>MKEQKWIHEGLITESLPNGMFRIRLDNEDMILGYVSGKIRRSFIRILPGDRVKIEVSRYDSTRGRIIYRLRNKNSKD</sequence>
<proteinExistence type="inferred from homology"/>
<geneLocation type="chloroplast"/>
<protein>
    <recommendedName>
        <fullName evidence="1">Translation initiation factor IF-1, chloroplastic</fullName>
    </recommendedName>
</protein>
<accession>Q95GM6</accession>